<keyword id="KW-1003">Cell membrane</keyword>
<keyword id="KW-1015">Disulfide bond</keyword>
<keyword id="KW-0325">Glycoprotein</keyword>
<keyword id="KW-0393">Immunoglobulin domain</keyword>
<keyword id="KW-0407">Ion channel</keyword>
<keyword id="KW-0406">Ion transport</keyword>
<keyword id="KW-0472">Membrane</keyword>
<keyword id="KW-1185">Reference proteome</keyword>
<keyword id="KW-0732">Signal</keyword>
<keyword id="KW-0915">Sodium</keyword>
<keyword id="KW-0894">Sodium channel</keyword>
<keyword id="KW-0739">Sodium transport</keyword>
<keyword id="KW-0812">Transmembrane</keyword>
<keyword id="KW-1133">Transmembrane helix</keyword>
<keyword id="KW-0813">Transport</keyword>
<keyword id="KW-0851">Voltage-gated channel</keyword>
<sequence length="215" mass="24789">MPAFNRLLPLASLVLIYWVRVCFPVCVEVPSETEAVQGNSMKLRCISCMKREEVEATTVVEWFYRPEGGKDFLIYEYRNGHQEVESPFQGRLQWNGSKDLQDVSITVLNVTLNDSGLYTCNVSREFEFEAHRPFVKTTRLIPLRVTEEAGEDFTSVVSEIMMYILLVFLTLWLFIEMIYCYRKVSKAEEAAQENASDYLAIPSENKENSVVPVEE</sequence>
<evidence type="ECO:0000250" key="1">
    <source>
        <dbReference type="UniProtKB" id="Q9JK00"/>
    </source>
</evidence>
<evidence type="ECO:0000250" key="2">
    <source>
        <dbReference type="UniProtKB" id="Q9NY72"/>
    </source>
</evidence>
<evidence type="ECO:0000255" key="3"/>
<evidence type="ECO:0000255" key="4">
    <source>
        <dbReference type="PROSITE-ProRule" id="PRU00114"/>
    </source>
</evidence>
<evidence type="ECO:0000305" key="5"/>
<evidence type="ECO:0000312" key="6">
    <source>
        <dbReference type="MGI" id="MGI:1918882"/>
    </source>
</evidence>
<feature type="signal peptide" evidence="3">
    <location>
        <begin position="1"/>
        <end position="24"/>
    </location>
</feature>
<feature type="chain" id="PRO_0000014935" description="Sodium channel regulatory subunit beta-3">
    <location>
        <begin position="25"/>
        <end position="215"/>
    </location>
</feature>
<feature type="topological domain" description="Extracellular" evidence="5">
    <location>
        <begin position="25"/>
        <end position="156"/>
    </location>
</feature>
<feature type="transmembrane region" description="Helical" evidence="2">
    <location>
        <begin position="157"/>
        <end position="178"/>
    </location>
</feature>
<feature type="topological domain" description="Cytoplasmic" evidence="5">
    <location>
        <begin position="179"/>
        <end position="215"/>
    </location>
</feature>
<feature type="domain" description="Ig-like C2-type" evidence="3">
    <location>
        <begin position="25"/>
        <end position="138"/>
    </location>
</feature>
<feature type="glycosylation site" description="N-linked (GlcNAc...) asparagine" evidence="3">
    <location>
        <position position="95"/>
    </location>
</feature>
<feature type="glycosylation site" description="N-linked (GlcNAc...) asparagine" evidence="3">
    <location>
        <position position="109"/>
    </location>
</feature>
<feature type="glycosylation site" description="N-linked (GlcNAc...) asparagine" evidence="3">
    <location>
        <position position="113"/>
    </location>
</feature>
<feature type="glycosylation site" description="N-linked (GlcNAc...) asparagine" evidence="3">
    <location>
        <position position="121"/>
    </location>
</feature>
<feature type="disulfide bond" evidence="2 4">
    <location>
        <begin position="26"/>
        <end position="48"/>
    </location>
</feature>
<feature type="disulfide bond" evidence="2 4">
    <location>
        <begin position="45"/>
        <end position="120"/>
    </location>
</feature>
<gene>
    <name evidence="6" type="primary">Scn3b</name>
</gene>
<name>SCN3B_MOUSE</name>
<dbReference type="EMBL" id="AY049036">
    <property type="protein sequence ID" value="AAL07512.1"/>
    <property type="molecule type" value="mRNA"/>
</dbReference>
<dbReference type="EMBL" id="AK049747">
    <property type="protein sequence ID" value="BAC33901.1"/>
    <property type="molecule type" value="mRNA"/>
</dbReference>
<dbReference type="EMBL" id="AK076466">
    <property type="protein sequence ID" value="BAC36356.1"/>
    <property type="molecule type" value="mRNA"/>
</dbReference>
<dbReference type="EMBL" id="BC053919">
    <property type="protein sequence ID" value="AAH53919.1"/>
    <property type="molecule type" value="mRNA"/>
</dbReference>
<dbReference type="EMBL" id="BC058636">
    <property type="protein sequence ID" value="AAH58636.1"/>
    <property type="molecule type" value="mRNA"/>
</dbReference>
<dbReference type="CCDS" id="CCDS23080.1"/>
<dbReference type="RefSeq" id="NP_001077386.1">
    <property type="nucleotide sequence ID" value="NM_001083917.1"/>
</dbReference>
<dbReference type="RefSeq" id="NP_001273543.1">
    <property type="nucleotide sequence ID" value="NM_001286614.1"/>
</dbReference>
<dbReference type="RefSeq" id="NP_001346629.1">
    <property type="nucleotide sequence ID" value="NM_001359700.1"/>
</dbReference>
<dbReference type="RefSeq" id="NP_839941.1">
    <property type="nucleotide sequence ID" value="NM_178227.4"/>
</dbReference>
<dbReference type="RefSeq" id="XP_006510297.1">
    <property type="nucleotide sequence ID" value="XM_006510234.1"/>
</dbReference>
<dbReference type="SMR" id="Q8BHK2"/>
<dbReference type="CORUM" id="Q8BHK2"/>
<dbReference type="FunCoup" id="Q8BHK2">
    <property type="interactions" value="853"/>
</dbReference>
<dbReference type="STRING" id="10090.ENSMUSP00000051627"/>
<dbReference type="GlyCosmos" id="Q8BHK2">
    <property type="glycosylation" value="4 sites, No reported glycans"/>
</dbReference>
<dbReference type="GlyGen" id="Q8BHK2">
    <property type="glycosylation" value="4 sites, 2 N-linked glycans (2 sites)"/>
</dbReference>
<dbReference type="iPTMnet" id="Q8BHK2"/>
<dbReference type="PhosphoSitePlus" id="Q8BHK2"/>
<dbReference type="PaxDb" id="10090-ENSMUSP00000051627"/>
<dbReference type="ProteomicsDB" id="255362"/>
<dbReference type="Antibodypedia" id="18943">
    <property type="antibodies" value="149 antibodies from 23 providers"/>
</dbReference>
<dbReference type="DNASU" id="235281"/>
<dbReference type="Ensembl" id="ENSMUST00000049941.12">
    <property type="protein sequence ID" value="ENSMUSP00000051627.6"/>
    <property type="gene ID" value="ENSMUSG00000049281.17"/>
</dbReference>
<dbReference type="Ensembl" id="ENSMUST00000114956.11">
    <property type="protein sequence ID" value="ENSMUSP00000110606.4"/>
    <property type="gene ID" value="ENSMUSG00000049281.17"/>
</dbReference>
<dbReference type="Ensembl" id="ENSMUST00000171835.9">
    <property type="protein sequence ID" value="ENSMUSP00000132933.3"/>
    <property type="gene ID" value="ENSMUSG00000049281.17"/>
</dbReference>
<dbReference type="GeneID" id="235281"/>
<dbReference type="KEGG" id="mmu:235281"/>
<dbReference type="UCSC" id="uc009ozj.1">
    <property type="organism name" value="mouse"/>
</dbReference>
<dbReference type="AGR" id="MGI:1918882"/>
<dbReference type="CTD" id="55800"/>
<dbReference type="MGI" id="MGI:1918882">
    <property type="gene designation" value="Scn3b"/>
</dbReference>
<dbReference type="VEuPathDB" id="HostDB:ENSMUSG00000049281"/>
<dbReference type="eggNOG" id="ENOG502QWH0">
    <property type="taxonomic scope" value="Eukaryota"/>
</dbReference>
<dbReference type="GeneTree" id="ENSGT00390000018560"/>
<dbReference type="InParanoid" id="Q8BHK2"/>
<dbReference type="OMA" id="QGSHMKL"/>
<dbReference type="OrthoDB" id="9440529at2759"/>
<dbReference type="PhylomeDB" id="Q8BHK2"/>
<dbReference type="TreeFam" id="TF332097"/>
<dbReference type="BioGRID-ORCS" id="235281">
    <property type="hits" value="5 hits in 76 CRISPR screens"/>
</dbReference>
<dbReference type="ChiTaRS" id="Scn3b">
    <property type="organism name" value="mouse"/>
</dbReference>
<dbReference type="PRO" id="PR:Q8BHK2"/>
<dbReference type="Proteomes" id="UP000000589">
    <property type="component" value="Chromosome 9"/>
</dbReference>
<dbReference type="RNAct" id="Q8BHK2">
    <property type="molecule type" value="protein"/>
</dbReference>
<dbReference type="Bgee" id="ENSMUSG00000049281">
    <property type="expression patterns" value="Expressed in superior cervical ganglion and 176 other cell types or tissues"/>
</dbReference>
<dbReference type="ExpressionAtlas" id="Q8BHK2">
    <property type="expression patterns" value="baseline and differential"/>
</dbReference>
<dbReference type="GO" id="GO:0005829">
    <property type="term" value="C:cytosol"/>
    <property type="evidence" value="ECO:0007669"/>
    <property type="project" value="Ensembl"/>
</dbReference>
<dbReference type="GO" id="GO:0043231">
    <property type="term" value="C:intracellular membrane-bounded organelle"/>
    <property type="evidence" value="ECO:0007669"/>
    <property type="project" value="Ensembl"/>
</dbReference>
<dbReference type="GO" id="GO:0001518">
    <property type="term" value="C:voltage-gated sodium channel complex"/>
    <property type="evidence" value="ECO:0007669"/>
    <property type="project" value="Ensembl"/>
</dbReference>
<dbReference type="GO" id="GO:0030018">
    <property type="term" value="C:Z disc"/>
    <property type="evidence" value="ECO:0000314"/>
    <property type="project" value="BHF-UCL"/>
</dbReference>
<dbReference type="GO" id="GO:0017080">
    <property type="term" value="F:sodium channel regulator activity"/>
    <property type="evidence" value="ECO:0007669"/>
    <property type="project" value="Ensembl"/>
</dbReference>
<dbReference type="GO" id="GO:0044325">
    <property type="term" value="F:transmembrane transporter binding"/>
    <property type="evidence" value="ECO:0000353"/>
    <property type="project" value="BHF-UCL"/>
</dbReference>
<dbReference type="GO" id="GO:0086006">
    <property type="term" value="F:voltage-gated sodium channel activity involved in cardiac muscle cell action potential"/>
    <property type="evidence" value="ECO:0000315"/>
    <property type="project" value="MGI"/>
</dbReference>
<dbReference type="GO" id="GO:0086014">
    <property type="term" value="P:atrial cardiac muscle cell action potential"/>
    <property type="evidence" value="ECO:0007669"/>
    <property type="project" value="Ensembl"/>
</dbReference>
<dbReference type="GO" id="GO:0061337">
    <property type="term" value="P:cardiac conduction"/>
    <property type="evidence" value="ECO:0000315"/>
    <property type="project" value="MGI"/>
</dbReference>
<dbReference type="GO" id="GO:0007399">
    <property type="term" value="P:nervous system development"/>
    <property type="evidence" value="ECO:0007669"/>
    <property type="project" value="Ensembl"/>
</dbReference>
<dbReference type="GO" id="GO:0010460">
    <property type="term" value="P:positive regulation of heart rate"/>
    <property type="evidence" value="ECO:0000315"/>
    <property type="project" value="BHF-UCL"/>
</dbReference>
<dbReference type="GO" id="GO:0010765">
    <property type="term" value="P:positive regulation of sodium ion transport"/>
    <property type="evidence" value="ECO:0007669"/>
    <property type="project" value="Ensembl"/>
</dbReference>
<dbReference type="GO" id="GO:0072659">
    <property type="term" value="P:protein localization to plasma membrane"/>
    <property type="evidence" value="ECO:0007669"/>
    <property type="project" value="Ensembl"/>
</dbReference>
<dbReference type="GO" id="GO:0060371">
    <property type="term" value="P:regulation of atrial cardiac muscle cell membrane depolarization"/>
    <property type="evidence" value="ECO:0000315"/>
    <property type="project" value="BHF-UCL"/>
</dbReference>
<dbReference type="GO" id="GO:0086091">
    <property type="term" value="P:regulation of heart rate by cardiac conduction"/>
    <property type="evidence" value="ECO:0007669"/>
    <property type="project" value="Ensembl"/>
</dbReference>
<dbReference type="GO" id="GO:0060373">
    <property type="term" value="P:regulation of ventricular cardiac muscle cell membrane depolarization"/>
    <property type="evidence" value="ECO:0007669"/>
    <property type="project" value="Ensembl"/>
</dbReference>
<dbReference type="GO" id="GO:0086015">
    <property type="term" value="P:SA node cell action potential"/>
    <property type="evidence" value="ECO:0000315"/>
    <property type="project" value="BHF-UCL"/>
</dbReference>
<dbReference type="GO" id="GO:0086005">
    <property type="term" value="P:ventricular cardiac muscle cell action potential"/>
    <property type="evidence" value="ECO:0000315"/>
    <property type="project" value="MGI"/>
</dbReference>
<dbReference type="FunFam" id="2.60.40.10:FF:000375">
    <property type="entry name" value="Sodium channel beta 1 subunit"/>
    <property type="match status" value="1"/>
</dbReference>
<dbReference type="Gene3D" id="2.60.40.10">
    <property type="entry name" value="Immunoglobulins"/>
    <property type="match status" value="1"/>
</dbReference>
<dbReference type="InterPro" id="IPR007110">
    <property type="entry name" value="Ig-like_dom"/>
</dbReference>
<dbReference type="InterPro" id="IPR036179">
    <property type="entry name" value="Ig-like_dom_sf"/>
</dbReference>
<dbReference type="InterPro" id="IPR013783">
    <property type="entry name" value="Ig-like_fold"/>
</dbReference>
<dbReference type="InterPro" id="IPR003599">
    <property type="entry name" value="Ig_sub"/>
</dbReference>
<dbReference type="InterPro" id="IPR013106">
    <property type="entry name" value="Ig_V-set"/>
</dbReference>
<dbReference type="InterPro" id="IPR027098">
    <property type="entry name" value="Na_channel_b1/b3"/>
</dbReference>
<dbReference type="PANTHER" id="PTHR10546">
    <property type="entry name" value="SODIUM CHANNEL SUBUNIT BETA-1 AND 3"/>
    <property type="match status" value="1"/>
</dbReference>
<dbReference type="PANTHER" id="PTHR10546:SF1">
    <property type="entry name" value="SODIUM CHANNEL SUBUNIT BETA-3"/>
    <property type="match status" value="1"/>
</dbReference>
<dbReference type="Pfam" id="PF07686">
    <property type="entry name" value="V-set"/>
    <property type="match status" value="1"/>
</dbReference>
<dbReference type="SMART" id="SM00409">
    <property type="entry name" value="IG"/>
    <property type="match status" value="1"/>
</dbReference>
<dbReference type="SMART" id="SM00406">
    <property type="entry name" value="IGv"/>
    <property type="match status" value="1"/>
</dbReference>
<dbReference type="SUPFAM" id="SSF48726">
    <property type="entry name" value="Immunoglobulin"/>
    <property type="match status" value="1"/>
</dbReference>
<dbReference type="PROSITE" id="PS50835">
    <property type="entry name" value="IG_LIKE"/>
    <property type="match status" value="1"/>
</dbReference>
<proteinExistence type="evidence at protein level"/>
<organism>
    <name type="scientific">Mus musculus</name>
    <name type="common">Mouse</name>
    <dbReference type="NCBI Taxonomy" id="10090"/>
    <lineage>
        <taxon>Eukaryota</taxon>
        <taxon>Metazoa</taxon>
        <taxon>Chordata</taxon>
        <taxon>Craniata</taxon>
        <taxon>Vertebrata</taxon>
        <taxon>Euteleostomi</taxon>
        <taxon>Mammalia</taxon>
        <taxon>Eutheria</taxon>
        <taxon>Euarchontoglires</taxon>
        <taxon>Glires</taxon>
        <taxon>Rodentia</taxon>
        <taxon>Myomorpha</taxon>
        <taxon>Muroidea</taxon>
        <taxon>Muridae</taxon>
        <taxon>Murinae</taxon>
        <taxon>Mus</taxon>
        <taxon>Mus</taxon>
    </lineage>
</organism>
<reference key="1">
    <citation type="submission" date="2001-07" db="EMBL/GenBank/DDBJ databases">
        <title>Mouse brain and heart beta 3 sodium channel cDNA.</title>
        <authorList>
            <person name="Chen C."/>
            <person name="Avery C."/>
            <person name="Kazen-Gillespie K."/>
            <person name="Isom L.L."/>
        </authorList>
    </citation>
    <scope>NUCLEOTIDE SEQUENCE [MRNA]</scope>
</reference>
<reference key="2">
    <citation type="journal article" date="2005" name="Science">
        <title>The transcriptional landscape of the mammalian genome.</title>
        <authorList>
            <person name="Carninci P."/>
            <person name="Kasukawa T."/>
            <person name="Katayama S."/>
            <person name="Gough J."/>
            <person name="Frith M.C."/>
            <person name="Maeda N."/>
            <person name="Oyama R."/>
            <person name="Ravasi T."/>
            <person name="Lenhard B."/>
            <person name="Wells C."/>
            <person name="Kodzius R."/>
            <person name="Shimokawa K."/>
            <person name="Bajic V.B."/>
            <person name="Brenner S.E."/>
            <person name="Batalov S."/>
            <person name="Forrest A.R."/>
            <person name="Zavolan M."/>
            <person name="Davis M.J."/>
            <person name="Wilming L.G."/>
            <person name="Aidinis V."/>
            <person name="Allen J.E."/>
            <person name="Ambesi-Impiombato A."/>
            <person name="Apweiler R."/>
            <person name="Aturaliya R.N."/>
            <person name="Bailey T.L."/>
            <person name="Bansal M."/>
            <person name="Baxter L."/>
            <person name="Beisel K.W."/>
            <person name="Bersano T."/>
            <person name="Bono H."/>
            <person name="Chalk A.M."/>
            <person name="Chiu K.P."/>
            <person name="Choudhary V."/>
            <person name="Christoffels A."/>
            <person name="Clutterbuck D.R."/>
            <person name="Crowe M.L."/>
            <person name="Dalla E."/>
            <person name="Dalrymple B.P."/>
            <person name="de Bono B."/>
            <person name="Della Gatta G."/>
            <person name="di Bernardo D."/>
            <person name="Down T."/>
            <person name="Engstrom P."/>
            <person name="Fagiolini M."/>
            <person name="Faulkner G."/>
            <person name="Fletcher C.F."/>
            <person name="Fukushima T."/>
            <person name="Furuno M."/>
            <person name="Futaki S."/>
            <person name="Gariboldi M."/>
            <person name="Georgii-Hemming P."/>
            <person name="Gingeras T.R."/>
            <person name="Gojobori T."/>
            <person name="Green R.E."/>
            <person name="Gustincich S."/>
            <person name="Harbers M."/>
            <person name="Hayashi Y."/>
            <person name="Hensch T.K."/>
            <person name="Hirokawa N."/>
            <person name="Hill D."/>
            <person name="Huminiecki L."/>
            <person name="Iacono M."/>
            <person name="Ikeo K."/>
            <person name="Iwama A."/>
            <person name="Ishikawa T."/>
            <person name="Jakt M."/>
            <person name="Kanapin A."/>
            <person name="Katoh M."/>
            <person name="Kawasawa Y."/>
            <person name="Kelso J."/>
            <person name="Kitamura H."/>
            <person name="Kitano H."/>
            <person name="Kollias G."/>
            <person name="Krishnan S.P."/>
            <person name="Kruger A."/>
            <person name="Kummerfeld S.K."/>
            <person name="Kurochkin I.V."/>
            <person name="Lareau L.F."/>
            <person name="Lazarevic D."/>
            <person name="Lipovich L."/>
            <person name="Liu J."/>
            <person name="Liuni S."/>
            <person name="McWilliam S."/>
            <person name="Madan Babu M."/>
            <person name="Madera M."/>
            <person name="Marchionni L."/>
            <person name="Matsuda H."/>
            <person name="Matsuzawa S."/>
            <person name="Miki H."/>
            <person name="Mignone F."/>
            <person name="Miyake S."/>
            <person name="Morris K."/>
            <person name="Mottagui-Tabar S."/>
            <person name="Mulder N."/>
            <person name="Nakano N."/>
            <person name="Nakauchi H."/>
            <person name="Ng P."/>
            <person name="Nilsson R."/>
            <person name="Nishiguchi S."/>
            <person name="Nishikawa S."/>
            <person name="Nori F."/>
            <person name="Ohara O."/>
            <person name="Okazaki Y."/>
            <person name="Orlando V."/>
            <person name="Pang K.C."/>
            <person name="Pavan W.J."/>
            <person name="Pavesi G."/>
            <person name="Pesole G."/>
            <person name="Petrovsky N."/>
            <person name="Piazza S."/>
            <person name="Reed J."/>
            <person name="Reid J.F."/>
            <person name="Ring B.Z."/>
            <person name="Ringwald M."/>
            <person name="Rost B."/>
            <person name="Ruan Y."/>
            <person name="Salzberg S.L."/>
            <person name="Sandelin A."/>
            <person name="Schneider C."/>
            <person name="Schoenbach C."/>
            <person name="Sekiguchi K."/>
            <person name="Semple C.A."/>
            <person name="Seno S."/>
            <person name="Sessa L."/>
            <person name="Sheng Y."/>
            <person name="Shibata Y."/>
            <person name="Shimada H."/>
            <person name="Shimada K."/>
            <person name="Silva D."/>
            <person name="Sinclair B."/>
            <person name="Sperling S."/>
            <person name="Stupka E."/>
            <person name="Sugiura K."/>
            <person name="Sultana R."/>
            <person name="Takenaka Y."/>
            <person name="Taki K."/>
            <person name="Tammoja K."/>
            <person name="Tan S.L."/>
            <person name="Tang S."/>
            <person name="Taylor M.S."/>
            <person name="Tegner J."/>
            <person name="Teichmann S.A."/>
            <person name="Ueda H.R."/>
            <person name="van Nimwegen E."/>
            <person name="Verardo R."/>
            <person name="Wei C.L."/>
            <person name="Yagi K."/>
            <person name="Yamanishi H."/>
            <person name="Zabarovsky E."/>
            <person name="Zhu S."/>
            <person name="Zimmer A."/>
            <person name="Hide W."/>
            <person name="Bult C."/>
            <person name="Grimmond S.M."/>
            <person name="Teasdale R.D."/>
            <person name="Liu E.T."/>
            <person name="Brusic V."/>
            <person name="Quackenbush J."/>
            <person name="Wahlestedt C."/>
            <person name="Mattick J.S."/>
            <person name="Hume D.A."/>
            <person name="Kai C."/>
            <person name="Sasaki D."/>
            <person name="Tomaru Y."/>
            <person name="Fukuda S."/>
            <person name="Kanamori-Katayama M."/>
            <person name="Suzuki M."/>
            <person name="Aoki J."/>
            <person name="Arakawa T."/>
            <person name="Iida J."/>
            <person name="Imamura K."/>
            <person name="Itoh M."/>
            <person name="Kato T."/>
            <person name="Kawaji H."/>
            <person name="Kawagashira N."/>
            <person name="Kawashima T."/>
            <person name="Kojima M."/>
            <person name="Kondo S."/>
            <person name="Konno H."/>
            <person name="Nakano K."/>
            <person name="Ninomiya N."/>
            <person name="Nishio T."/>
            <person name="Okada M."/>
            <person name="Plessy C."/>
            <person name="Shibata K."/>
            <person name="Shiraki T."/>
            <person name="Suzuki S."/>
            <person name="Tagami M."/>
            <person name="Waki K."/>
            <person name="Watahiki A."/>
            <person name="Okamura-Oho Y."/>
            <person name="Suzuki H."/>
            <person name="Kawai J."/>
            <person name="Hayashizaki Y."/>
        </authorList>
    </citation>
    <scope>NUCLEOTIDE SEQUENCE [LARGE SCALE MRNA]</scope>
    <source>
        <strain>C57BL/6J</strain>
        <tissue>Head</tissue>
        <tissue>Spinal cord</tissue>
    </source>
</reference>
<reference key="3">
    <citation type="journal article" date="2004" name="Genome Res.">
        <title>The status, quality, and expansion of the NIH full-length cDNA project: the Mammalian Gene Collection (MGC).</title>
        <authorList>
            <consortium name="The MGC Project Team"/>
        </authorList>
    </citation>
    <scope>NUCLEOTIDE SEQUENCE [LARGE SCALE MRNA]</scope>
    <source>
        <tissue>Brain</tissue>
        <tissue>Olfactory epithelium</tissue>
    </source>
</reference>
<reference key="4">
    <citation type="journal article" date="2010" name="Cell">
        <title>A tissue-specific atlas of mouse protein phosphorylation and expression.</title>
        <authorList>
            <person name="Huttlin E.L."/>
            <person name="Jedrychowski M.P."/>
            <person name="Elias J.E."/>
            <person name="Goswami T."/>
            <person name="Rad R."/>
            <person name="Beausoleil S.A."/>
            <person name="Villen J."/>
            <person name="Haas W."/>
            <person name="Sowa M.E."/>
            <person name="Gygi S.P."/>
        </authorList>
    </citation>
    <scope>IDENTIFICATION BY MASS SPECTROMETRY [LARGE SCALE ANALYSIS]</scope>
    <source>
        <tissue>Brain</tissue>
        <tissue>Lung</tissue>
    </source>
</reference>
<protein>
    <recommendedName>
        <fullName evidence="5">Sodium channel regulatory subunit beta-3</fullName>
    </recommendedName>
</protein>
<comment type="function">
    <text evidence="1 2">Regulatory subunit of multiple voltage-gated sodium (Nav) channels directly mediating the depolarization of excitable membranes. Navs, also called VGSCs (voltage-gated sodium channels) or VDSCs (voltage-dependent sodium channels), operate by switching between closed and open conformations depending on the voltage difference across the membrane. In the open conformation they allow Na(+) ions to selectively pass through the pore, along their electrochemical gradient. The influx of Na+ ions provokes membrane depolarization, initiating the propagation of electrical signals throughout cells and tissues. The accessory beta subunits participate in localization and functional modulation of the Nav channels (By similarity). Modulates the activity of SCN2A/Nav1.2, causing a hyperpolarizing shift in the voltage-dependence of inactivation of the channel and increasing the fraction of channels operating in the fast gating mode (By similarity). Modulates the activity of SCN5A/Nav1.5. Could also regulate the atypical sodium channel SCN7A/Nav2.1. Modulates the activity of SCN10A/Nav1.8, regulating its oligomerization and accelerating the recovery from inactivation (By similarity).</text>
</comment>
<comment type="subunit">
    <text evidence="1 2">A voltage-gated sodium (Nav) channel consists of an ion-conducting pore-forming alpha subunit functional on its own that is regulated by one or more beta subunits. Forms homodimers and homotrimers. SCN3B is non-covalently associated with alpha subunits and induces the formation of alpha subunit oligomers, including trimers. Interacts with SCN5A/Nav1.5; regulatory subunit of SCN5A/Nav1.5. Interacts with SCN7A/Nav2.1; probable regulatory subunit of SCN7A/Nav2.1 (By similarity). Interacts with SCN10A; regulatory subunit of SCN10A/Nav1.8. Interacts with NFASC; probably involved in targeting the sodium channels to the nodes of Ranvier (By similarity).</text>
</comment>
<comment type="subcellular location">
    <subcellularLocation>
        <location evidence="2">Cell membrane</location>
        <topology evidence="2">Single-pass type I membrane protein</topology>
    </subcellularLocation>
</comment>
<comment type="PTM">
    <text evidence="2">Intramolecular disulfide bonds favor the voltage-gated sodium channel oligomeric complex assembly.</text>
</comment>
<comment type="PTM">
    <text evidence="2">N-glycosylated.</text>
</comment>
<comment type="similarity">
    <text evidence="5">Belongs to the sodium channel auxiliary subunit SCN3B (TC 8.A.17) family.</text>
</comment>
<accession>Q8BHK2</accession>
<accession>Q91Z99</accession>